<name>YGCU_ECO57</name>
<feature type="chain" id="PRO_0000128184" description="Uncharacterized FAD-linked oxidoreductase YgcU">
    <location>
        <begin position="1"/>
        <end position="484"/>
    </location>
</feature>
<feature type="domain" description="FAD-binding PCMH-type" evidence="1">
    <location>
        <begin position="47"/>
        <end position="226"/>
    </location>
</feature>
<evidence type="ECO:0000255" key="1">
    <source>
        <dbReference type="PROSITE-ProRule" id="PRU00718"/>
    </source>
</evidence>
<evidence type="ECO:0000305" key="2"/>
<keyword id="KW-0274">FAD</keyword>
<keyword id="KW-0285">Flavoprotein</keyword>
<keyword id="KW-0560">Oxidoreductase</keyword>
<keyword id="KW-1185">Reference proteome</keyword>
<organism>
    <name type="scientific">Escherichia coli O157:H7</name>
    <dbReference type="NCBI Taxonomy" id="83334"/>
    <lineage>
        <taxon>Bacteria</taxon>
        <taxon>Pseudomonadati</taxon>
        <taxon>Pseudomonadota</taxon>
        <taxon>Gammaproteobacteria</taxon>
        <taxon>Enterobacterales</taxon>
        <taxon>Enterobacteriaceae</taxon>
        <taxon>Escherichia</taxon>
    </lineage>
</organism>
<accession>Q8X7S0</accession>
<dbReference type="EC" id="1.-.-.-"/>
<dbReference type="EMBL" id="AE005174">
    <property type="protein sequence ID" value="AAG57882.1"/>
    <property type="status" value="ALT_INIT"/>
    <property type="molecule type" value="Genomic_DNA"/>
</dbReference>
<dbReference type="EMBL" id="BA000007">
    <property type="protein sequence ID" value="BAB37052.1"/>
    <property type="molecule type" value="Genomic_DNA"/>
</dbReference>
<dbReference type="PIR" id="E91082">
    <property type="entry name" value="E91082"/>
</dbReference>
<dbReference type="PIR" id="F85927">
    <property type="entry name" value="F85927"/>
</dbReference>
<dbReference type="RefSeq" id="NP_311656.1">
    <property type="nucleotide sequence ID" value="NC_002695.1"/>
</dbReference>
<dbReference type="RefSeq" id="WP_000059304.1">
    <property type="nucleotide sequence ID" value="NZ_VOAI01000003.1"/>
</dbReference>
<dbReference type="SMR" id="Q8X7S0"/>
<dbReference type="STRING" id="155864.Z4084"/>
<dbReference type="GeneID" id="914648"/>
<dbReference type="KEGG" id="ece:Z4084"/>
<dbReference type="KEGG" id="ecs:ECs_3629"/>
<dbReference type="PATRIC" id="fig|386585.9.peg.3793"/>
<dbReference type="eggNOG" id="COG0277">
    <property type="taxonomic scope" value="Bacteria"/>
</dbReference>
<dbReference type="HOGENOM" id="CLU_017779_2_3_6"/>
<dbReference type="OMA" id="YNEDWMR"/>
<dbReference type="Proteomes" id="UP000000558">
    <property type="component" value="Chromosome"/>
</dbReference>
<dbReference type="Proteomes" id="UP000002519">
    <property type="component" value="Chromosome"/>
</dbReference>
<dbReference type="GO" id="GO:0008609">
    <property type="term" value="F:alkylglycerone-phosphate synthase activity"/>
    <property type="evidence" value="ECO:0007669"/>
    <property type="project" value="InterPro"/>
</dbReference>
<dbReference type="GO" id="GO:0071949">
    <property type="term" value="F:FAD binding"/>
    <property type="evidence" value="ECO:0007669"/>
    <property type="project" value="InterPro"/>
</dbReference>
<dbReference type="GO" id="GO:0016491">
    <property type="term" value="F:oxidoreductase activity"/>
    <property type="evidence" value="ECO:0007669"/>
    <property type="project" value="UniProtKB-KW"/>
</dbReference>
<dbReference type="GO" id="GO:0008610">
    <property type="term" value="P:lipid biosynthetic process"/>
    <property type="evidence" value="ECO:0007669"/>
    <property type="project" value="InterPro"/>
</dbReference>
<dbReference type="Gene3D" id="3.30.300.330">
    <property type="match status" value="1"/>
</dbReference>
<dbReference type="Gene3D" id="3.30.465.10">
    <property type="match status" value="1"/>
</dbReference>
<dbReference type="Gene3D" id="3.30.70.3450">
    <property type="match status" value="1"/>
</dbReference>
<dbReference type="Gene3D" id="3.30.43.10">
    <property type="entry name" value="Uridine Diphospho-n-acetylenolpyruvylglucosamine Reductase, domain 2"/>
    <property type="match status" value="1"/>
</dbReference>
<dbReference type="Gene3D" id="1.10.45.10">
    <property type="entry name" value="Vanillyl-alcohol Oxidase, Chain A, domain 4"/>
    <property type="match status" value="1"/>
</dbReference>
<dbReference type="InterPro" id="IPR025650">
    <property type="entry name" value="Alkyl-DHAP_Synthase"/>
</dbReference>
<dbReference type="InterPro" id="IPR004113">
    <property type="entry name" value="FAD-bd_oxidored_4_C"/>
</dbReference>
<dbReference type="InterPro" id="IPR016166">
    <property type="entry name" value="FAD-bd_PCMH"/>
</dbReference>
<dbReference type="InterPro" id="IPR036318">
    <property type="entry name" value="FAD-bd_PCMH-like_sf"/>
</dbReference>
<dbReference type="InterPro" id="IPR016167">
    <property type="entry name" value="FAD-bd_PCMH_sub1"/>
</dbReference>
<dbReference type="InterPro" id="IPR016169">
    <property type="entry name" value="FAD-bd_PCMH_sub2"/>
</dbReference>
<dbReference type="InterPro" id="IPR016164">
    <property type="entry name" value="FAD-linked_Oxase-like_C"/>
</dbReference>
<dbReference type="InterPro" id="IPR006094">
    <property type="entry name" value="Oxid_FAD_bind_N"/>
</dbReference>
<dbReference type="InterPro" id="IPR016171">
    <property type="entry name" value="Vanillyl_alc_oxidase_C-sub2"/>
</dbReference>
<dbReference type="PANTHER" id="PTHR46568">
    <property type="entry name" value="ALKYLDIHYDROXYACETONEPHOSPHATE SYNTHASE, PEROXISOMAL"/>
    <property type="match status" value="1"/>
</dbReference>
<dbReference type="PANTHER" id="PTHR46568:SF1">
    <property type="entry name" value="ALKYLDIHYDROXYACETONEPHOSPHATE SYNTHASE, PEROXISOMAL"/>
    <property type="match status" value="1"/>
</dbReference>
<dbReference type="Pfam" id="PF02913">
    <property type="entry name" value="FAD-oxidase_C"/>
    <property type="match status" value="1"/>
</dbReference>
<dbReference type="Pfam" id="PF01565">
    <property type="entry name" value="FAD_binding_4"/>
    <property type="match status" value="1"/>
</dbReference>
<dbReference type="SUPFAM" id="SSF56176">
    <property type="entry name" value="FAD-binding/transporter-associated domain-like"/>
    <property type="match status" value="1"/>
</dbReference>
<dbReference type="SUPFAM" id="SSF55103">
    <property type="entry name" value="FAD-linked oxidases, C-terminal domain"/>
    <property type="match status" value="1"/>
</dbReference>
<dbReference type="PROSITE" id="PS51387">
    <property type="entry name" value="FAD_PCMH"/>
    <property type="match status" value="1"/>
</dbReference>
<gene>
    <name type="primary">ygcU</name>
    <name type="ordered locus">Z4084</name>
    <name type="ordered locus">ECs3629</name>
</gene>
<protein>
    <recommendedName>
        <fullName>Uncharacterized FAD-linked oxidoreductase YgcU</fullName>
        <ecNumber>1.-.-.-</ecNumber>
    </recommendedName>
</protein>
<reference key="1">
    <citation type="journal article" date="2001" name="Nature">
        <title>Genome sequence of enterohaemorrhagic Escherichia coli O157:H7.</title>
        <authorList>
            <person name="Perna N.T."/>
            <person name="Plunkett G. III"/>
            <person name="Burland V."/>
            <person name="Mau B."/>
            <person name="Glasner J.D."/>
            <person name="Rose D.J."/>
            <person name="Mayhew G.F."/>
            <person name="Evans P.S."/>
            <person name="Gregor J."/>
            <person name="Kirkpatrick H.A."/>
            <person name="Posfai G."/>
            <person name="Hackett J."/>
            <person name="Klink S."/>
            <person name="Boutin A."/>
            <person name="Shao Y."/>
            <person name="Miller L."/>
            <person name="Grotbeck E.J."/>
            <person name="Davis N.W."/>
            <person name="Lim A."/>
            <person name="Dimalanta E.T."/>
            <person name="Potamousis K."/>
            <person name="Apodaca J."/>
            <person name="Anantharaman T.S."/>
            <person name="Lin J."/>
            <person name="Yen G."/>
            <person name="Schwartz D.C."/>
            <person name="Welch R.A."/>
            <person name="Blattner F.R."/>
        </authorList>
    </citation>
    <scope>NUCLEOTIDE SEQUENCE [LARGE SCALE GENOMIC DNA]</scope>
    <source>
        <strain>O157:H7 / EDL933 / ATCC 700927 / EHEC</strain>
    </source>
</reference>
<reference key="2">
    <citation type="journal article" date="2001" name="DNA Res.">
        <title>Complete genome sequence of enterohemorrhagic Escherichia coli O157:H7 and genomic comparison with a laboratory strain K-12.</title>
        <authorList>
            <person name="Hayashi T."/>
            <person name="Makino K."/>
            <person name="Ohnishi M."/>
            <person name="Kurokawa K."/>
            <person name="Ishii K."/>
            <person name="Yokoyama K."/>
            <person name="Han C.-G."/>
            <person name="Ohtsubo E."/>
            <person name="Nakayama K."/>
            <person name="Murata T."/>
            <person name="Tanaka M."/>
            <person name="Tobe T."/>
            <person name="Iida T."/>
            <person name="Takami H."/>
            <person name="Honda T."/>
            <person name="Sasakawa C."/>
            <person name="Ogasawara N."/>
            <person name="Yasunaga T."/>
            <person name="Kuhara S."/>
            <person name="Shiba T."/>
            <person name="Hattori M."/>
            <person name="Shinagawa H."/>
        </authorList>
    </citation>
    <scope>NUCLEOTIDE SEQUENCE [LARGE SCALE GENOMIC DNA]</scope>
    <source>
        <strain>O157:H7 / Sakai / RIMD 0509952 / EHEC</strain>
    </source>
</reference>
<comment type="similarity">
    <text evidence="2">Belongs to the FAD-binding oxidoreductase/transferase type 4 family.</text>
</comment>
<comment type="sequence caution" evidence="2">
    <conflict type="erroneous initiation">
        <sequence resource="EMBL-CDS" id="AAG57882"/>
    </conflict>
</comment>
<proteinExistence type="inferred from homology"/>
<sequence length="484" mass="53708">MSLSRAAIVDQLKEIVGADRVITDETVLKKNSIDRFRKFPDIHGIYTLPIPAAVVKLGSTEQVSRVLNFMNAHKINGVPRTGASATEGGLETVVENSVVLDGSAMNQIINIDIENMQATAQCGVPLEVLENALREKGYTTGHSPQSKPLAQMGGLVATRSIGQFSTLYGAIEDMVVGLEAVLADGTVTRIKNVPRRAAGPDIRHIIIGNEGALCYITEVTVKIFKFTPENNLFYGYILEDMKTGFNILREIMVEGYRPSIARLYDAEDGTQHFTHFADGKCVLIFMAEGNPRIAKATGEGIAEIVARYPQCQRVDSKLIETWFNNLNWGPDKVAAERVQILKTGNMGFTTEVSGCWSCIHEIYESVINRIRTEFPHADDITMLGGHSSHSYQNGTNMYFVYDYNVVNCKPEEEIDKYHNPLNKIICEETIRLGGSMVHHHGIGKHRVHWSKLEHGSAWALLEGLKKQFDPNGIMNTGTIYPIEK</sequence>